<accession>A8A3T9</accession>
<gene>
    <name evidence="1" type="primary">fucU</name>
    <name type="ordered locus">EcHS_A2948</name>
</gene>
<organism>
    <name type="scientific">Escherichia coli O9:H4 (strain HS)</name>
    <dbReference type="NCBI Taxonomy" id="331112"/>
    <lineage>
        <taxon>Bacteria</taxon>
        <taxon>Pseudomonadati</taxon>
        <taxon>Pseudomonadota</taxon>
        <taxon>Gammaproteobacteria</taxon>
        <taxon>Enterobacterales</taxon>
        <taxon>Enterobacteriaceae</taxon>
        <taxon>Escherichia</taxon>
    </lineage>
</organism>
<proteinExistence type="inferred from homology"/>
<dbReference type="EC" id="5.1.3.29" evidence="1"/>
<dbReference type="EMBL" id="CP000802">
    <property type="protein sequence ID" value="ABV07193.1"/>
    <property type="molecule type" value="Genomic_DNA"/>
</dbReference>
<dbReference type="RefSeq" id="WP_000920840.1">
    <property type="nucleotide sequence ID" value="NC_009800.1"/>
</dbReference>
<dbReference type="SMR" id="A8A3T9"/>
<dbReference type="GeneID" id="93779194"/>
<dbReference type="KEGG" id="ecx:EcHS_A2948"/>
<dbReference type="HOGENOM" id="CLU_120075_1_0_6"/>
<dbReference type="UniPathway" id="UPA00956"/>
<dbReference type="GO" id="GO:0005737">
    <property type="term" value="C:cytoplasm"/>
    <property type="evidence" value="ECO:0007669"/>
    <property type="project" value="UniProtKB-SubCell"/>
</dbReference>
<dbReference type="GO" id="GO:0042806">
    <property type="term" value="F:fucose binding"/>
    <property type="evidence" value="ECO:0007669"/>
    <property type="project" value="InterPro"/>
</dbReference>
<dbReference type="GO" id="GO:0036373">
    <property type="term" value="F:L-fucose mutarotase activity"/>
    <property type="evidence" value="ECO:0007669"/>
    <property type="project" value="UniProtKB-EC"/>
</dbReference>
<dbReference type="GO" id="GO:0036065">
    <property type="term" value="P:fucosylation"/>
    <property type="evidence" value="ECO:0007669"/>
    <property type="project" value="TreeGrafter"/>
</dbReference>
<dbReference type="GO" id="GO:0042354">
    <property type="term" value="P:L-fucose metabolic process"/>
    <property type="evidence" value="ECO:0007669"/>
    <property type="project" value="UniProtKB-UniRule"/>
</dbReference>
<dbReference type="FunFam" id="3.40.1650.10:FF:000001">
    <property type="entry name" value="L-fucose mutarotase"/>
    <property type="match status" value="1"/>
</dbReference>
<dbReference type="Gene3D" id="3.40.1650.10">
    <property type="entry name" value="RbsD-like domain"/>
    <property type="match status" value="1"/>
</dbReference>
<dbReference type="HAMAP" id="MF_01662">
    <property type="entry name" value="L_fucose_rotase"/>
    <property type="match status" value="1"/>
</dbReference>
<dbReference type="InterPro" id="IPR023751">
    <property type="entry name" value="L-fucose_mutarotase"/>
</dbReference>
<dbReference type="InterPro" id="IPR023750">
    <property type="entry name" value="RbsD-like_sf"/>
</dbReference>
<dbReference type="InterPro" id="IPR050443">
    <property type="entry name" value="RbsD/FucU_mutarotase"/>
</dbReference>
<dbReference type="InterPro" id="IPR007721">
    <property type="entry name" value="RbsD_FucU"/>
</dbReference>
<dbReference type="NCBIfam" id="NF011949">
    <property type="entry name" value="PRK15420.1"/>
    <property type="match status" value="1"/>
</dbReference>
<dbReference type="PANTHER" id="PTHR31690">
    <property type="entry name" value="FUCOSE MUTAROTASE"/>
    <property type="match status" value="1"/>
</dbReference>
<dbReference type="PANTHER" id="PTHR31690:SF4">
    <property type="entry name" value="FUCOSE MUTAROTASE"/>
    <property type="match status" value="1"/>
</dbReference>
<dbReference type="Pfam" id="PF05025">
    <property type="entry name" value="RbsD_FucU"/>
    <property type="match status" value="1"/>
</dbReference>
<dbReference type="SUPFAM" id="SSF102546">
    <property type="entry name" value="RbsD-like"/>
    <property type="match status" value="1"/>
</dbReference>
<evidence type="ECO:0000255" key="1">
    <source>
        <dbReference type="HAMAP-Rule" id="MF_01662"/>
    </source>
</evidence>
<sequence>MLKTISPLISPELLKVLAEMGHGDEIIFSDAHFPAHSMGPQVIRADGLLVSDLLQAIIPLFELDSYAPPLVMMAAVEGDTLDPEVERRYRNALSLQAPCPDIIRINRFAFYERAQKAFAIVITGERAKYGNILLKKGVTP</sequence>
<keyword id="KW-0119">Carbohydrate metabolism</keyword>
<keyword id="KW-0963">Cytoplasm</keyword>
<keyword id="KW-0294">Fucose metabolism</keyword>
<keyword id="KW-0413">Isomerase</keyword>
<comment type="function">
    <text evidence="1">Involved in the anomeric conversion of L-fucose.</text>
</comment>
<comment type="catalytic activity">
    <reaction evidence="1">
        <text>alpha-L-fucose = beta-L-fucose</text>
        <dbReference type="Rhea" id="RHEA:25580"/>
        <dbReference type="ChEBI" id="CHEBI:42548"/>
        <dbReference type="ChEBI" id="CHEBI:42589"/>
        <dbReference type="EC" id="5.1.3.29"/>
    </reaction>
</comment>
<comment type="pathway">
    <text evidence="1">Carbohydrate metabolism; L-fucose metabolism.</text>
</comment>
<comment type="subunit">
    <text evidence="1">Homodecamer.</text>
</comment>
<comment type="subcellular location">
    <subcellularLocation>
        <location evidence="1">Cytoplasm</location>
    </subcellularLocation>
</comment>
<comment type="similarity">
    <text evidence="1">Belongs to the RbsD / FucU family. FucU mutarotase subfamily.</text>
</comment>
<reference key="1">
    <citation type="journal article" date="2008" name="J. Bacteriol.">
        <title>The pangenome structure of Escherichia coli: comparative genomic analysis of E. coli commensal and pathogenic isolates.</title>
        <authorList>
            <person name="Rasko D.A."/>
            <person name="Rosovitz M.J."/>
            <person name="Myers G.S.A."/>
            <person name="Mongodin E.F."/>
            <person name="Fricke W.F."/>
            <person name="Gajer P."/>
            <person name="Crabtree J."/>
            <person name="Sebaihia M."/>
            <person name="Thomson N.R."/>
            <person name="Chaudhuri R."/>
            <person name="Henderson I.R."/>
            <person name="Sperandio V."/>
            <person name="Ravel J."/>
        </authorList>
    </citation>
    <scope>NUCLEOTIDE SEQUENCE [LARGE SCALE GENOMIC DNA]</scope>
    <source>
        <strain>HS</strain>
    </source>
</reference>
<protein>
    <recommendedName>
        <fullName evidence="1">L-fucose mutarotase</fullName>
        <ecNumber evidence="1">5.1.3.29</ecNumber>
    </recommendedName>
    <alternativeName>
        <fullName evidence="1">Fucose 1-epimerase</fullName>
    </alternativeName>
    <alternativeName>
        <fullName evidence="1">Type-2 mutarotase</fullName>
    </alternativeName>
</protein>
<name>FUCM_ECOHS</name>
<feature type="chain" id="PRO_0000344545" description="L-fucose mutarotase">
    <location>
        <begin position="1"/>
        <end position="140"/>
    </location>
</feature>
<feature type="active site" description="Proton donor" evidence="1">
    <location>
        <position position="22"/>
    </location>
</feature>
<feature type="binding site" evidence="1">
    <location>
        <position position="30"/>
    </location>
    <ligand>
        <name>substrate</name>
    </ligand>
</feature>
<feature type="binding site" evidence="1">
    <location>
        <position position="107"/>
    </location>
    <ligand>
        <name>substrate</name>
    </ligand>
</feature>
<feature type="binding site" evidence="1">
    <location>
        <begin position="129"/>
        <end position="131"/>
    </location>
    <ligand>
        <name>substrate</name>
    </ligand>
</feature>